<organism>
    <name type="scientific">Homo sapiens</name>
    <name type="common">Human</name>
    <dbReference type="NCBI Taxonomy" id="9606"/>
    <lineage>
        <taxon>Eukaryota</taxon>
        <taxon>Metazoa</taxon>
        <taxon>Chordata</taxon>
        <taxon>Craniata</taxon>
        <taxon>Vertebrata</taxon>
        <taxon>Euteleostomi</taxon>
        <taxon>Mammalia</taxon>
        <taxon>Eutheria</taxon>
        <taxon>Euarchontoglires</taxon>
        <taxon>Primates</taxon>
        <taxon>Haplorrhini</taxon>
        <taxon>Catarrhini</taxon>
        <taxon>Hominidae</taxon>
        <taxon>Homo</taxon>
    </lineage>
</organism>
<dbReference type="EC" id="3.6.5.-" evidence="3 26"/>
<dbReference type="EMBL" id="AF323609">
    <property type="protein sequence ID" value="AAG45221.1"/>
    <property type="molecule type" value="mRNA"/>
</dbReference>
<dbReference type="EMBL" id="AF272035">
    <property type="protein sequence ID" value="AAG32662.1"/>
    <property type="molecule type" value="mRNA"/>
</dbReference>
<dbReference type="EMBL" id="AL139260">
    <property type="status" value="NOT_ANNOTATED_CDS"/>
    <property type="molecule type" value="Genomic_DNA"/>
</dbReference>
<dbReference type="EMBL" id="BC016668">
    <property type="protein sequence ID" value="AAH16668.1"/>
    <property type="molecule type" value="mRNA"/>
</dbReference>
<dbReference type="EMBL" id="AK023373">
    <property type="protein sequence ID" value="BAB14548.1"/>
    <property type="status" value="ALT_INIT"/>
    <property type="molecule type" value="mRNA"/>
</dbReference>
<dbReference type="CCDS" id="CCDS430.1"/>
<dbReference type="RefSeq" id="NP_001258780.1">
    <property type="nucleotide sequence ID" value="NM_001271851.1"/>
</dbReference>
<dbReference type="RefSeq" id="NP_071440.1">
    <property type="nucleotide sequence ID" value="NM_022157.4"/>
</dbReference>
<dbReference type="PDB" id="3LLU">
    <property type="method" value="X-ray"/>
    <property type="resolution" value="1.40 A"/>
    <property type="chains" value="A=60-237"/>
</dbReference>
<dbReference type="PDB" id="6CES">
    <property type="method" value="EM"/>
    <property type="resolution" value="4.00 A"/>
    <property type="chains" value="C=1-399"/>
</dbReference>
<dbReference type="PDB" id="6EHR">
    <property type="method" value="X-ray"/>
    <property type="resolution" value="2.90 A"/>
    <property type="chains" value="G=239-399"/>
</dbReference>
<dbReference type="PDB" id="6NZD">
    <property type="method" value="EM"/>
    <property type="resolution" value="3.60 A"/>
    <property type="chains" value="G=1-399"/>
</dbReference>
<dbReference type="PDB" id="6S6A">
    <property type="method" value="X-ray"/>
    <property type="resolution" value="2.63 A"/>
    <property type="chains" value="C/D=1-399"/>
</dbReference>
<dbReference type="PDB" id="6S6D">
    <property type="method" value="X-ray"/>
    <property type="resolution" value="2.50 A"/>
    <property type="chains" value="C/D=1-399"/>
</dbReference>
<dbReference type="PDB" id="6SB0">
    <property type="method" value="EM"/>
    <property type="resolution" value="5.50 A"/>
    <property type="chains" value="D/J=1-399"/>
</dbReference>
<dbReference type="PDB" id="6SB2">
    <property type="method" value="EM"/>
    <property type="resolution" value="6.20 A"/>
    <property type="chains" value="D/J=1-399"/>
</dbReference>
<dbReference type="PDB" id="6U62">
    <property type="method" value="EM"/>
    <property type="resolution" value="3.18 A"/>
    <property type="chains" value="C=2-399"/>
</dbReference>
<dbReference type="PDB" id="6ULG">
    <property type="method" value="EM"/>
    <property type="resolution" value="3.31 A"/>
    <property type="chains" value="G=1-399"/>
</dbReference>
<dbReference type="PDB" id="6WJ2">
    <property type="method" value="EM"/>
    <property type="resolution" value="3.20 A"/>
    <property type="chains" value="G=1-399"/>
</dbReference>
<dbReference type="PDB" id="6WJ3">
    <property type="method" value="EM"/>
    <property type="resolution" value="3.90 A"/>
    <property type="chains" value="G=1-399"/>
</dbReference>
<dbReference type="PDB" id="7T3A">
    <property type="method" value="EM"/>
    <property type="resolution" value="4.00 A"/>
    <property type="chains" value="L=1-399"/>
</dbReference>
<dbReference type="PDB" id="7T3B">
    <property type="method" value="EM"/>
    <property type="resolution" value="3.90 A"/>
    <property type="chains" value="E=1-399"/>
</dbReference>
<dbReference type="PDB" id="7T3C">
    <property type="method" value="EM"/>
    <property type="resolution" value="4.00 A"/>
    <property type="chains" value="E/L=1-399"/>
</dbReference>
<dbReference type="PDB" id="7UX2">
    <property type="method" value="EM"/>
    <property type="resolution" value="2.90 A"/>
    <property type="chains" value="C/J=1-399"/>
</dbReference>
<dbReference type="PDB" id="7UXC">
    <property type="method" value="EM"/>
    <property type="resolution" value="3.20 A"/>
    <property type="chains" value="E/L=1-399"/>
</dbReference>
<dbReference type="PDB" id="7UXH">
    <property type="method" value="EM"/>
    <property type="resolution" value="3.20 A"/>
    <property type="chains" value="G/N/W/d=1-399"/>
</dbReference>
<dbReference type="PDB" id="8DHB">
    <property type="method" value="EM"/>
    <property type="resolution" value="3.53 A"/>
    <property type="chains" value="A=1-399"/>
</dbReference>
<dbReference type="PDBsum" id="3LLU"/>
<dbReference type="PDBsum" id="6CES"/>
<dbReference type="PDBsum" id="6EHR"/>
<dbReference type="PDBsum" id="6NZD"/>
<dbReference type="PDBsum" id="6S6A"/>
<dbReference type="PDBsum" id="6S6D"/>
<dbReference type="PDBsum" id="6SB0"/>
<dbReference type="PDBsum" id="6SB2"/>
<dbReference type="PDBsum" id="6U62"/>
<dbReference type="PDBsum" id="6ULG"/>
<dbReference type="PDBsum" id="6WJ2"/>
<dbReference type="PDBsum" id="6WJ3"/>
<dbReference type="PDBsum" id="7T3A"/>
<dbReference type="PDBsum" id="7T3B"/>
<dbReference type="PDBsum" id="7T3C"/>
<dbReference type="PDBsum" id="7UX2"/>
<dbReference type="PDBsum" id="7UXC"/>
<dbReference type="PDBsum" id="7UXH"/>
<dbReference type="PDBsum" id="8DHB"/>
<dbReference type="EMDB" id="EMD-0554"/>
<dbReference type="EMDB" id="EMD-10132"/>
<dbReference type="EMDB" id="EMD-10133"/>
<dbReference type="EMDB" id="EMD-20660"/>
<dbReference type="EMDB" id="EMD-20814"/>
<dbReference type="EMDB" id="EMD-21686"/>
<dbReference type="EMDB" id="EMD-21687"/>
<dbReference type="EMDB" id="EMD-25652"/>
<dbReference type="EMDB" id="EMD-25653"/>
<dbReference type="EMDB" id="EMD-25654"/>
<dbReference type="EMDB" id="EMD-26846"/>
<dbReference type="EMDB" id="EMD-26857"/>
<dbReference type="EMDB" id="EMD-26861"/>
<dbReference type="EMDB" id="EMD-27435"/>
<dbReference type="EMDB" id="EMD-7464"/>
<dbReference type="SMR" id="Q9HB90"/>
<dbReference type="BioGRID" id="122074">
    <property type="interactions" value="72"/>
</dbReference>
<dbReference type="ComplexPortal" id="CPX-2514">
    <property type="entry name" value="RAG guanosine triphosphatase complex, RAGB-RAGC variant"/>
</dbReference>
<dbReference type="ComplexPortal" id="CPX-2542">
    <property type="entry name" value="RAG guanosine triphosphatase complex, RAGA-RAGC variant"/>
</dbReference>
<dbReference type="CORUM" id="Q9HB90"/>
<dbReference type="DIP" id="DIP-37515N"/>
<dbReference type="FunCoup" id="Q9HB90">
    <property type="interactions" value="4206"/>
</dbReference>
<dbReference type="IntAct" id="Q9HB90">
    <property type="interactions" value="32"/>
</dbReference>
<dbReference type="MINT" id="Q9HB90"/>
<dbReference type="STRING" id="9606.ENSP00000362092"/>
<dbReference type="GlyGen" id="Q9HB90">
    <property type="glycosylation" value="2 sites, 1 N-linked glycan (1 site), 1 O-linked glycan (1 site)"/>
</dbReference>
<dbReference type="iPTMnet" id="Q9HB90"/>
<dbReference type="MetOSite" id="Q9HB90"/>
<dbReference type="PhosphoSitePlus" id="Q9HB90"/>
<dbReference type="SwissPalm" id="Q9HB90"/>
<dbReference type="BioMuta" id="RRAGC"/>
<dbReference type="DMDM" id="74752776"/>
<dbReference type="jPOST" id="Q9HB90"/>
<dbReference type="MassIVE" id="Q9HB90"/>
<dbReference type="PaxDb" id="9606-ENSP00000362092"/>
<dbReference type="PeptideAtlas" id="Q9HB90"/>
<dbReference type="ProteomicsDB" id="81509"/>
<dbReference type="Pumba" id="Q9HB90"/>
<dbReference type="Antibodypedia" id="17665">
    <property type="antibodies" value="279 antibodies from 29 providers"/>
</dbReference>
<dbReference type="DNASU" id="64121"/>
<dbReference type="Ensembl" id="ENST00000373001.4">
    <property type="protein sequence ID" value="ENSP00000362092.3"/>
    <property type="gene ID" value="ENSG00000116954.8"/>
</dbReference>
<dbReference type="GeneID" id="64121"/>
<dbReference type="KEGG" id="hsa:64121"/>
<dbReference type="MANE-Select" id="ENST00000373001.4">
    <property type="protein sequence ID" value="ENSP00000362092.3"/>
    <property type="RefSeq nucleotide sequence ID" value="NM_022157.4"/>
    <property type="RefSeq protein sequence ID" value="NP_071440.1"/>
</dbReference>
<dbReference type="UCSC" id="uc001ccq.4">
    <property type="organism name" value="human"/>
</dbReference>
<dbReference type="AGR" id="HGNC:19902"/>
<dbReference type="CTD" id="64121"/>
<dbReference type="DisGeNET" id="64121"/>
<dbReference type="GeneCards" id="RRAGC"/>
<dbReference type="HGNC" id="HGNC:19902">
    <property type="gene designation" value="RRAGC"/>
</dbReference>
<dbReference type="HPA" id="ENSG00000116954">
    <property type="expression patterns" value="Low tissue specificity"/>
</dbReference>
<dbReference type="MalaCards" id="RRAGC"/>
<dbReference type="MIM" id="608267">
    <property type="type" value="gene"/>
</dbReference>
<dbReference type="MIM" id="620609">
    <property type="type" value="phenotype"/>
</dbReference>
<dbReference type="neXtProt" id="NX_Q9HB90"/>
<dbReference type="OpenTargets" id="ENSG00000116954"/>
<dbReference type="PharmGKB" id="PA134862062"/>
<dbReference type="VEuPathDB" id="HostDB:ENSG00000116954"/>
<dbReference type="eggNOG" id="KOG3887">
    <property type="taxonomic scope" value="Eukaryota"/>
</dbReference>
<dbReference type="GeneTree" id="ENSGT00950000183031"/>
<dbReference type="HOGENOM" id="CLU_047421_1_1_1"/>
<dbReference type="InParanoid" id="Q9HB90"/>
<dbReference type="OMA" id="NCRTFQE"/>
<dbReference type="OrthoDB" id="26136at2759"/>
<dbReference type="PAN-GO" id="Q9HB90">
    <property type="GO annotations" value="8 GO annotations based on evolutionary models"/>
</dbReference>
<dbReference type="PhylomeDB" id="Q9HB90"/>
<dbReference type="TreeFam" id="TF300659"/>
<dbReference type="PathwayCommons" id="Q9HB90"/>
<dbReference type="Reactome" id="R-HSA-1632852">
    <property type="pathway name" value="Macroautophagy"/>
</dbReference>
<dbReference type="Reactome" id="R-HSA-165159">
    <property type="pathway name" value="MTOR signalling"/>
</dbReference>
<dbReference type="Reactome" id="R-HSA-166208">
    <property type="pathway name" value="mTORC1-mediated signalling"/>
</dbReference>
<dbReference type="Reactome" id="R-HSA-380972">
    <property type="pathway name" value="Energy dependent regulation of mTOR by LKB1-AMPK"/>
</dbReference>
<dbReference type="Reactome" id="R-HSA-5628897">
    <property type="pathway name" value="TP53 Regulates Metabolic Genes"/>
</dbReference>
<dbReference type="Reactome" id="R-HSA-8943724">
    <property type="pathway name" value="Regulation of PTEN gene transcription"/>
</dbReference>
<dbReference type="Reactome" id="R-HSA-9639288">
    <property type="pathway name" value="Amino acids regulate mTORC1"/>
</dbReference>
<dbReference type="SignaLink" id="Q9HB90"/>
<dbReference type="SIGNOR" id="Q9HB90"/>
<dbReference type="BioGRID-ORCS" id="64121">
    <property type="hits" value="177 hits in 1169 CRISPR screens"/>
</dbReference>
<dbReference type="ChiTaRS" id="RRAGC">
    <property type="organism name" value="human"/>
</dbReference>
<dbReference type="EvolutionaryTrace" id="Q9HB90"/>
<dbReference type="GeneWiki" id="RRAGC"/>
<dbReference type="GenomeRNAi" id="64121"/>
<dbReference type="Pharos" id="Q9HB90">
    <property type="development level" value="Tbio"/>
</dbReference>
<dbReference type="PRO" id="PR:Q9HB90"/>
<dbReference type="Proteomes" id="UP000005640">
    <property type="component" value="Chromosome 1"/>
</dbReference>
<dbReference type="RNAct" id="Q9HB90">
    <property type="molecule type" value="protein"/>
</dbReference>
<dbReference type="Bgee" id="ENSG00000116954">
    <property type="expression patterns" value="Expressed in islet of Langerhans and 114 other cell types or tissues"/>
</dbReference>
<dbReference type="GO" id="GO:0005737">
    <property type="term" value="C:cytoplasm"/>
    <property type="evidence" value="ECO:0000314"/>
    <property type="project" value="UniProtKB"/>
</dbReference>
<dbReference type="GO" id="GO:0005829">
    <property type="term" value="C:cytosol"/>
    <property type="evidence" value="ECO:0000304"/>
    <property type="project" value="Reactome"/>
</dbReference>
<dbReference type="GO" id="GO:1990877">
    <property type="term" value="C:FNIP-folliculin RagC/D GAP"/>
    <property type="evidence" value="ECO:0000314"/>
    <property type="project" value="UniProtKB"/>
</dbReference>
<dbReference type="GO" id="GO:1990131">
    <property type="term" value="C:Gtr1-Gtr2 GTPase complex"/>
    <property type="evidence" value="ECO:0000318"/>
    <property type="project" value="GO_Central"/>
</dbReference>
<dbReference type="GO" id="GO:0043231">
    <property type="term" value="C:intracellular membrane-bounded organelle"/>
    <property type="evidence" value="ECO:0000314"/>
    <property type="project" value="HPA"/>
</dbReference>
<dbReference type="GO" id="GO:0005765">
    <property type="term" value="C:lysosomal membrane"/>
    <property type="evidence" value="ECO:0000314"/>
    <property type="project" value="UniProtKB"/>
</dbReference>
<dbReference type="GO" id="GO:0005764">
    <property type="term" value="C:lysosome"/>
    <property type="evidence" value="ECO:0000314"/>
    <property type="project" value="UniProtKB"/>
</dbReference>
<dbReference type="GO" id="GO:0005654">
    <property type="term" value="C:nucleoplasm"/>
    <property type="evidence" value="ECO:0000314"/>
    <property type="project" value="HPA"/>
</dbReference>
<dbReference type="GO" id="GO:0005634">
    <property type="term" value="C:nucleus"/>
    <property type="evidence" value="ECO:0000314"/>
    <property type="project" value="UniProtKB"/>
</dbReference>
<dbReference type="GO" id="GO:0140767">
    <property type="term" value="F:enzyme-substrate adaptor activity"/>
    <property type="evidence" value="ECO:0000314"/>
    <property type="project" value="UniProt"/>
</dbReference>
<dbReference type="GO" id="GO:0019003">
    <property type="term" value="F:GDP binding"/>
    <property type="evidence" value="ECO:0000314"/>
    <property type="project" value="UniProtKB"/>
</dbReference>
<dbReference type="GO" id="GO:0005525">
    <property type="term" value="F:GTP binding"/>
    <property type="evidence" value="ECO:0000314"/>
    <property type="project" value="HGNC-UCL"/>
</dbReference>
<dbReference type="GO" id="GO:0003924">
    <property type="term" value="F:GTPase activity"/>
    <property type="evidence" value="ECO:0000314"/>
    <property type="project" value="UniProtKB"/>
</dbReference>
<dbReference type="GO" id="GO:0051020">
    <property type="term" value="F:GTPase binding"/>
    <property type="evidence" value="ECO:0000353"/>
    <property type="project" value="CAFA"/>
</dbReference>
<dbReference type="GO" id="GO:0000287">
    <property type="term" value="F:magnesium ion binding"/>
    <property type="evidence" value="ECO:0000303"/>
    <property type="project" value="UniProtKB"/>
</dbReference>
<dbReference type="GO" id="GO:0060090">
    <property type="term" value="F:molecular adaptor activity"/>
    <property type="evidence" value="ECO:0000314"/>
    <property type="project" value="UniProtKB"/>
</dbReference>
<dbReference type="GO" id="GO:0046982">
    <property type="term" value="F:protein heterodimerization activity"/>
    <property type="evidence" value="ECO:0000353"/>
    <property type="project" value="UniProtKB"/>
</dbReference>
<dbReference type="GO" id="GO:0043495">
    <property type="term" value="F:protein-membrane adaptor activity"/>
    <property type="evidence" value="ECO:0000314"/>
    <property type="project" value="UniProtKB"/>
</dbReference>
<dbReference type="GO" id="GO:0006915">
    <property type="term" value="P:apoptotic process"/>
    <property type="evidence" value="ECO:0000303"/>
    <property type="project" value="UniProtKB"/>
</dbReference>
<dbReference type="GO" id="GO:0034198">
    <property type="term" value="P:cellular response to amino acid starvation"/>
    <property type="evidence" value="ECO:0000316"/>
    <property type="project" value="UniProtKB"/>
</dbReference>
<dbReference type="GO" id="GO:0071230">
    <property type="term" value="P:cellular response to amino acid stimulus"/>
    <property type="evidence" value="ECO:0000250"/>
    <property type="project" value="UniProtKB"/>
</dbReference>
<dbReference type="GO" id="GO:0031669">
    <property type="term" value="P:cellular response to nutrient levels"/>
    <property type="evidence" value="ECO:0000314"/>
    <property type="project" value="UniProt"/>
</dbReference>
<dbReference type="GO" id="GO:0009267">
    <property type="term" value="P:cellular response to starvation"/>
    <property type="evidence" value="ECO:0000318"/>
    <property type="project" value="GO_Central"/>
</dbReference>
<dbReference type="GO" id="GO:0006351">
    <property type="term" value="P:DNA-templated transcription"/>
    <property type="evidence" value="ECO:0000303"/>
    <property type="project" value="UniProtKB"/>
</dbReference>
<dbReference type="GO" id="GO:0010507">
    <property type="term" value="P:negative regulation of autophagy"/>
    <property type="evidence" value="ECO:0000318"/>
    <property type="project" value="GO_Central"/>
</dbReference>
<dbReference type="GO" id="GO:1904263">
    <property type="term" value="P:positive regulation of TORC1 signaling"/>
    <property type="evidence" value="ECO:0000314"/>
    <property type="project" value="UniProtKB"/>
</dbReference>
<dbReference type="GO" id="GO:0008104">
    <property type="term" value="P:protein localization"/>
    <property type="evidence" value="ECO:0000250"/>
    <property type="project" value="UniProtKB"/>
</dbReference>
<dbReference type="GO" id="GO:0061462">
    <property type="term" value="P:protein localization to lysosome"/>
    <property type="evidence" value="ECO:0000314"/>
    <property type="project" value="UniProt"/>
</dbReference>
<dbReference type="GO" id="GO:0072657">
    <property type="term" value="P:protein localization to membrane"/>
    <property type="evidence" value="ECO:0000314"/>
    <property type="project" value="UniProtKB"/>
</dbReference>
<dbReference type="GO" id="GO:0032006">
    <property type="term" value="P:regulation of TOR signaling"/>
    <property type="evidence" value="ECO:0000316"/>
    <property type="project" value="UniProtKB"/>
</dbReference>
<dbReference type="GO" id="GO:1903432">
    <property type="term" value="P:regulation of TORC1 signaling"/>
    <property type="evidence" value="ECO:0000315"/>
    <property type="project" value="UniProtKB"/>
</dbReference>
<dbReference type="GO" id="GO:0043200">
    <property type="term" value="P:response to amino acid"/>
    <property type="evidence" value="ECO:0000315"/>
    <property type="project" value="UniProtKB"/>
</dbReference>
<dbReference type="GO" id="GO:0008380">
    <property type="term" value="P:RNA splicing"/>
    <property type="evidence" value="ECO:0000303"/>
    <property type="project" value="UniProtKB"/>
</dbReference>
<dbReference type="GO" id="GO:0007264">
    <property type="term" value="P:small GTPase-mediated signal transduction"/>
    <property type="evidence" value="ECO:0000304"/>
    <property type="project" value="UniProtKB"/>
</dbReference>
<dbReference type="CDD" id="cd11385">
    <property type="entry name" value="RagC_like"/>
    <property type="match status" value="1"/>
</dbReference>
<dbReference type="FunFam" id="3.30.450.190:FF:000001">
    <property type="entry name" value="Ras-related GTP-binding protein C"/>
    <property type="match status" value="1"/>
</dbReference>
<dbReference type="FunFam" id="3.40.50.300:FF:000226">
    <property type="entry name" value="Ras-related GTP-binding protein D"/>
    <property type="match status" value="1"/>
</dbReference>
<dbReference type="Gene3D" id="3.30.450.190">
    <property type="match status" value="1"/>
</dbReference>
<dbReference type="Gene3D" id="3.40.50.300">
    <property type="entry name" value="P-loop containing nucleotide triphosphate hydrolases"/>
    <property type="match status" value="1"/>
</dbReference>
<dbReference type="InterPro" id="IPR006762">
    <property type="entry name" value="Gtr1_RagA"/>
</dbReference>
<dbReference type="InterPro" id="IPR027417">
    <property type="entry name" value="P-loop_NTPase"/>
</dbReference>
<dbReference type="InterPro" id="IPR039400">
    <property type="entry name" value="RagC/D"/>
</dbReference>
<dbReference type="PANTHER" id="PTHR11259">
    <property type="entry name" value="RAS-RELATED GTP BINDING RAG/GTR YEAST"/>
    <property type="match status" value="1"/>
</dbReference>
<dbReference type="PANTHER" id="PTHR11259:SF6">
    <property type="entry name" value="RAS-RELATED GTP-BINDING PROTEIN C"/>
    <property type="match status" value="1"/>
</dbReference>
<dbReference type="Pfam" id="PF04670">
    <property type="entry name" value="Gtr1_RagA"/>
    <property type="match status" value="1"/>
</dbReference>
<dbReference type="SUPFAM" id="SSF52540">
    <property type="entry name" value="P-loop containing nucleoside triphosphate hydrolases"/>
    <property type="match status" value="1"/>
</dbReference>
<accession>Q9HB90</accession>
<accession>Q9H202</accession>
<accession>Q9H8Q8</accession>
<evidence type="ECO:0000250" key="1">
    <source>
        <dbReference type="UniProtKB" id="Q99K70"/>
    </source>
</evidence>
<evidence type="ECO:0000256" key="2">
    <source>
        <dbReference type="SAM" id="MobiDB-lite"/>
    </source>
</evidence>
<evidence type="ECO:0000269" key="3">
    <source>
    </source>
</evidence>
<evidence type="ECO:0000269" key="4">
    <source>
    </source>
</evidence>
<evidence type="ECO:0000269" key="5">
    <source>
    </source>
</evidence>
<evidence type="ECO:0000269" key="6">
    <source>
    </source>
</evidence>
<evidence type="ECO:0000269" key="7">
    <source>
    </source>
</evidence>
<evidence type="ECO:0000269" key="8">
    <source>
    </source>
</evidence>
<evidence type="ECO:0000269" key="9">
    <source>
    </source>
</evidence>
<evidence type="ECO:0000269" key="10">
    <source>
    </source>
</evidence>
<evidence type="ECO:0000269" key="11">
    <source>
    </source>
</evidence>
<evidence type="ECO:0000269" key="12">
    <source>
    </source>
</evidence>
<evidence type="ECO:0000269" key="13">
    <source>
    </source>
</evidence>
<evidence type="ECO:0000269" key="14">
    <source>
    </source>
</evidence>
<evidence type="ECO:0000269" key="15">
    <source>
    </source>
</evidence>
<evidence type="ECO:0000269" key="16">
    <source>
    </source>
</evidence>
<evidence type="ECO:0000269" key="17">
    <source>
    </source>
</evidence>
<evidence type="ECO:0000269" key="18">
    <source>
    </source>
</evidence>
<evidence type="ECO:0000269" key="19">
    <source>
    </source>
</evidence>
<evidence type="ECO:0000269" key="20">
    <source>
    </source>
</evidence>
<evidence type="ECO:0000269" key="21">
    <source>
    </source>
</evidence>
<evidence type="ECO:0000269" key="22">
    <source>
    </source>
</evidence>
<evidence type="ECO:0000269" key="23">
    <source>
    </source>
</evidence>
<evidence type="ECO:0000269" key="24">
    <source>
    </source>
</evidence>
<evidence type="ECO:0000305" key="25"/>
<evidence type="ECO:0000305" key="26">
    <source>
    </source>
</evidence>
<evidence type="ECO:0000312" key="27">
    <source>
        <dbReference type="EMBL" id="AAG32662.1"/>
    </source>
</evidence>
<evidence type="ECO:0000312" key="28">
    <source>
        <dbReference type="EMBL" id="AAG45221.1"/>
    </source>
</evidence>
<evidence type="ECO:0000312" key="29">
    <source>
        <dbReference type="EMBL" id="AAH16668.1"/>
    </source>
</evidence>
<evidence type="ECO:0000312" key="30">
    <source>
        <dbReference type="EMBL" id="BAB14548.1"/>
    </source>
</evidence>
<evidence type="ECO:0000312" key="31">
    <source>
        <dbReference type="HGNC" id="HGNC:19902"/>
    </source>
</evidence>
<evidence type="ECO:0007744" key="32">
    <source>
        <dbReference type="PDB" id="6CES"/>
    </source>
</evidence>
<evidence type="ECO:0007744" key="33">
    <source>
        <dbReference type="PDB" id="6EHR"/>
    </source>
</evidence>
<evidence type="ECO:0007744" key="34">
    <source>
        <dbReference type="PDB" id="6NZD"/>
    </source>
</evidence>
<evidence type="ECO:0007744" key="35">
    <source>
        <dbReference type="PDB" id="6SB0"/>
    </source>
</evidence>
<evidence type="ECO:0007744" key="36">
    <source>
        <dbReference type="PDB" id="6SB2"/>
    </source>
</evidence>
<evidence type="ECO:0007744" key="37">
    <source>
        <dbReference type="PDB" id="6U62"/>
    </source>
</evidence>
<evidence type="ECO:0007744" key="38">
    <source>
        <dbReference type="PDB" id="6ULG"/>
    </source>
</evidence>
<evidence type="ECO:0007744" key="39">
    <source>
        <dbReference type="PDB" id="6WJ2"/>
    </source>
</evidence>
<evidence type="ECO:0007744" key="40">
    <source>
        <dbReference type="PDB" id="6WJ3"/>
    </source>
</evidence>
<evidence type="ECO:0007744" key="41">
    <source>
        <dbReference type="PDB" id="7T3A"/>
    </source>
</evidence>
<evidence type="ECO:0007744" key="42">
    <source>
        <dbReference type="PDB" id="7T3B"/>
    </source>
</evidence>
<evidence type="ECO:0007744" key="43">
    <source>
        <dbReference type="PDB" id="7T3C"/>
    </source>
</evidence>
<evidence type="ECO:0007744" key="44">
    <source>
        <dbReference type="PDB" id="7UX2"/>
    </source>
</evidence>
<evidence type="ECO:0007744" key="45">
    <source>
        <dbReference type="PDB" id="7UXC"/>
    </source>
</evidence>
<evidence type="ECO:0007744" key="46">
    <source>
        <dbReference type="PDB" id="7UXH"/>
    </source>
</evidence>
<evidence type="ECO:0007744" key="47">
    <source>
        <dbReference type="PDB" id="8DHB"/>
    </source>
</evidence>
<evidence type="ECO:0007744" key="48">
    <source>
    </source>
</evidence>
<evidence type="ECO:0007744" key="49">
    <source>
    </source>
</evidence>
<evidence type="ECO:0007829" key="50">
    <source>
        <dbReference type="PDB" id="3LLU"/>
    </source>
</evidence>
<evidence type="ECO:0007829" key="51">
    <source>
        <dbReference type="PDB" id="6S6A"/>
    </source>
</evidence>
<evidence type="ECO:0007829" key="52">
    <source>
        <dbReference type="PDB" id="6S6D"/>
    </source>
</evidence>
<evidence type="ECO:0007829" key="53">
    <source>
        <dbReference type="PDB" id="6U62"/>
    </source>
</evidence>
<evidence type="ECO:0007829" key="54">
    <source>
        <dbReference type="PDB" id="6ULG"/>
    </source>
</evidence>
<evidence type="ECO:0007829" key="55">
    <source>
        <dbReference type="PDB" id="6WJ2"/>
    </source>
</evidence>
<sequence length="399" mass="44224">MSLQYGAEETPLAGSYGAADSFPKDFGYGVEEEEEEAAAAGGGVGAGAGGGCGPGGADSSKPRILLMGLRRSGKSSIQKVVFHKMSPNETLFLESTNKIYKDDISNSSFVNFQIWDFPGQMDFFDPTFDYEMIFRGTGALIYVIDAQDDYMEALTRLHITVSKAYKVNPDMNFEVFIHKVDGLSDDHKIETQRDIHQRANDDLADAGLEKLHLSFYLTSIYDHSIFEAFSKVVQKLIPQLPTLENLLNIFISNSGIEKAFLFDVVSKIYIATDSSPVDMQSYELCCDMIDVVIDVSCIYGLKEDGSGSAYDKESMAIIKLNNTTVLYLKEVTKFLALVCILREESFERKGLIDYNFHCFRKAIHEVFEVGVTSHRSCGHQTSASSLKALTHNGTPRNAI</sequence>
<keyword id="KW-0002">3D-structure</keyword>
<keyword id="KW-0007">Acetylation</keyword>
<keyword id="KW-0122">Cardiomyopathy</keyword>
<keyword id="KW-0963">Cytoplasm</keyword>
<keyword id="KW-0225">Disease variant</keyword>
<keyword id="KW-0342">GTP-binding</keyword>
<keyword id="KW-0378">Hydrolase</keyword>
<keyword id="KW-0458">Lysosome</keyword>
<keyword id="KW-0472">Membrane</keyword>
<keyword id="KW-0547">Nucleotide-binding</keyword>
<keyword id="KW-0539">Nucleus</keyword>
<keyword id="KW-0597">Phosphoprotein</keyword>
<keyword id="KW-1267">Proteomics identification</keyword>
<keyword id="KW-1185">Reference proteome</keyword>
<gene>
    <name evidence="31" type="primary">RRAGC</name>
</gene>
<name>RRAGC_HUMAN</name>
<comment type="function">
    <text evidence="6 8 13 15 16 19 20 21 23 24">Guanine nucleotide-binding protein that plays a crucial role in the cellular response to amino acid availability through regulation of the mTORC1 signaling cascade (PubMed:20381137, PubMed:24095279, PubMed:27234373, PubMed:31601708, PubMed:31601764, PubMed:32612235, PubMed:34071043, PubMed:36697823, PubMed:37057673). Forms heterodimeric Rag complexes with RagA/RRAGA or RagB/RRAGB and cycles between an inactive GTP-bound and an active GDP-bound form: RagC/RRAGC is in its active form when GDP-bound RagC/RRAGC forms a complex with GTP-bound RagA/RRAGA (or RagB/RRAGB) and in an inactive form when GTP-bound RagC/RRAGC heterodimerizes with GDP-bound RagA/RRAGA (or RagB/RRAGB) (PubMed:24095279, PubMed:31601708, PubMed:31601764, PubMed:32868926). In its GDP-bound active form, promotes the recruitment of mTORC1 to the lysosomes and its subsequent activation by the GTPase RHEB (PubMed:20381137, PubMed:24095279, PubMed:27234373, PubMed:32612235, PubMed:36697823). This is a crucial step in the activation of the MTOR signaling cascade by amino acids (PubMed:20381137, PubMed:24095279, PubMed:27234373). Also plays a central role in the non-canonical mTORC1 complex, which acts independently of RHEB and specifically mediates phosphorylation of MiT/TFE factors TFEB and TFE3: GDP-bound RagC/RRAGC mediates recruitment of MiT/TFE factors TFEB and TFE3 (PubMed:32612235, PubMed:36697823).</text>
</comment>
<comment type="catalytic activity">
    <reaction evidence="3 20 26">
        <text>GTP + H2O = GDP + phosphate + H(+)</text>
        <dbReference type="Rhea" id="RHEA:19669"/>
        <dbReference type="ChEBI" id="CHEBI:15377"/>
        <dbReference type="ChEBI" id="CHEBI:15378"/>
        <dbReference type="ChEBI" id="CHEBI:37565"/>
        <dbReference type="ChEBI" id="CHEBI:43474"/>
        <dbReference type="ChEBI" id="CHEBI:58189"/>
    </reaction>
    <physiologicalReaction direction="left-to-right" evidence="3 26">
        <dbReference type="Rhea" id="RHEA:19670"/>
    </physiologicalReaction>
</comment>
<comment type="activity regulation">
    <text evidence="8 22">The activation of RagC/RRAGC is mediated by a GTPase activating protein (GAP) (PubMed:24095279). In high-amino acid conditions, activated by GTPase activating protein FLCN that stimulates RRAGC GTPase activity to turn it into its active GDP-bound form (PubMed:24095279). In response to amino acid depletion, the GATOR1 complex inactivates RagC/RRAGC by securing the GTP-bound inactive form (PubMed:35338845).</text>
</comment>
<comment type="subunit">
    <text evidence="1 3 4 5 7 9 10 11 15 16 17 18 19 20 21 23 24">Forms a heterodimer with RRAGA, in a sequence-independent manner, and RRAGB (PubMed:11073942, PubMed:14660641, PubMed:32868926). Heterodimerization stabilizes proteins of the heterodimer (PubMed:11073942). The GDP-bound form of RRAGC (in complex with the GTP-bound form of RRAGA or RRAGB), interacts with RPTOR, thereby promoting recruitment of mTORC1 to the lysosomes (PubMed:18497260, PubMed:31601708, PubMed:31601764). Component of the lysosomal folliculin complex (LFC), composed of FLCN, FNIP1 (or FNIP2), RagA/RRAGA or RagB/RRAGB GDP-bound, RagC/RRAGC or RagD/RRAGD GTP-bound, and Ragulator (PubMed:31672913, PubMed:31704029, PubMed:32868926). Interacts with NOL8 (PubMed:14660641). Interacts with SH3BP4; the interaction with this negative regulator is most probably direct, preferentially occurs with the inactive GDP-bound form of RRAGB, is negatively regulated by amino acids and prevents interaction with RPTOR (PubMed:22575674). The Rag heterodimer interacts with SLC38A9; the probable amino acid sensor (PubMed:25561175, PubMed:25567906, PubMed:32868926). Interacts with SESN1, SESN2 and SESN3 (PubMed:25259925). Interacts with PIP4P1 (By similarity). The Rag heterodimer interacts with the Ragulator complex (PubMed:32868926). The GDP-bound form interacts with TFEB (PubMed:32612235, PubMed:34071043, PubMed:36697823, PubMed:37057673). The GDP-bound form interacts with TFE3 (By similarity).</text>
</comment>
<comment type="interaction">
    <interactant intactId="EBI-752390">
        <id>Q9HB90</id>
    </interactant>
    <interactant intactId="EBI-715385">
        <id>Q6IAA8</id>
        <label>LAMTOR1</label>
    </interactant>
    <organismsDiffer>false</organismsDiffer>
    <experiments>21</experiments>
</comment>
<comment type="interaction">
    <interactant intactId="EBI-752390">
        <id>Q9HB90</id>
    </interactant>
    <interactant intactId="EBI-2554690">
        <id>Q96IY1</id>
        <label>NSL1</label>
    </interactant>
    <organismsDiffer>false</organismsDiffer>
    <experiments>2</experiments>
</comment>
<comment type="interaction">
    <interactant intactId="EBI-752390">
        <id>Q9HB90</id>
    </interactant>
    <interactant intactId="EBI-752376">
        <id>Q7L523</id>
        <label>RRAGA</label>
    </interactant>
    <organismsDiffer>false</organismsDiffer>
    <experiments>44</experiments>
</comment>
<comment type="interaction">
    <interactant intactId="EBI-752390">
        <id>Q9HB90</id>
    </interactant>
    <interactant intactId="EBI-993049">
        <id>Q5VZM2</id>
        <label>RRAGB</label>
    </interactant>
    <organismsDiffer>false</organismsDiffer>
    <experiments>10</experiments>
</comment>
<comment type="interaction">
    <interactant intactId="EBI-752390">
        <id>Q9HB90</id>
    </interactant>
    <interactant intactId="EBI-9978316">
        <id>Q8NBW4</id>
        <label>SLC38A9</label>
    </interactant>
    <organismsDiffer>false</organismsDiffer>
    <experiments>9</experiments>
</comment>
<comment type="subcellular location">
    <subcellularLocation>
        <location evidence="3">Cytoplasm</location>
    </subcellularLocation>
    <subcellularLocation>
        <location evidence="3">Nucleus</location>
    </subcellularLocation>
    <subcellularLocation>
        <location evidence="6 14">Lysosome membrane</location>
    </subcellularLocation>
    <text evidence="3 6 14">Predominantly cytoplasmic (PubMed:11073942). Recruited to the lysosome surface by the Ragulator complex (PubMed:20381137, PubMed:28935770). May shuttle between the cytoplasm and nucleus, depending on the bound nucleotide state of associated RRAGA (PubMed:11073942).</text>
</comment>
<comment type="disease" evidence="12 13 21 24">
    <disease id="DI-06796">
        <name>Long-Olsen-Distelmaier syndrome</name>
        <acronym>LNGODS</acronym>
        <description>An autosomal dominant syndrome characterized by lethal dilated cardiomyopathy, bilateral cataracts, mild facial dysmorphisms, and liver dysfunction. Some patients have brain abnormalities, including pachygyria, polymicrogyria, and septo-optic dysplasia. Death occurs in infancy.</description>
        <dbReference type="MIM" id="620609"/>
    </disease>
    <text>The disease is caused by variants affecting the gene represented in this entry.</text>
</comment>
<comment type="disease">
    <text evidence="13">RRAGC mutations have been found in a patient with idiopathic dilated cardiomyopathy with ventricular dilation and systolic dysfunction, bilateral cataracts, and mild facial dysmorphisms.</text>
</comment>
<comment type="similarity">
    <text evidence="25">Belongs to the GTR/RAG GTP-binding protein family.</text>
</comment>
<comment type="sequence caution" evidence="25">
    <conflict type="erroneous initiation">
        <sequence resource="EMBL-CDS" id="BAB14548"/>
    </conflict>
    <text>Truncated N-terminus.</text>
</comment>
<proteinExistence type="evidence at protein level"/>
<feature type="initiator methionine" description="Removed" evidence="48">
    <location>
        <position position="1"/>
    </location>
</feature>
<feature type="chain" id="PRO_0000239951" description="Ras-related GTP-binding protein C">
    <location>
        <begin position="2"/>
        <end position="399"/>
    </location>
</feature>
<feature type="region of interest" description="Disordered" evidence="2">
    <location>
        <begin position="1"/>
        <end position="20"/>
    </location>
</feature>
<feature type="binding site" evidence="15 16 22 23 35 36 37 43 44 45 46">
    <location>
        <position position="71"/>
    </location>
    <ligand>
        <name>GDP</name>
        <dbReference type="ChEBI" id="CHEBI:58189"/>
    </ligand>
</feature>
<feature type="binding site" evidence="16 22 35 36 42 43">
    <location>
        <position position="72"/>
    </location>
    <ligand>
        <name>GDP</name>
        <dbReference type="ChEBI" id="CHEBI:58189"/>
    </ligand>
</feature>
<feature type="binding site" evidence="15 16 22 23 35 37 42 44 45 46">
    <location>
        <position position="73"/>
    </location>
    <ligand>
        <name>GDP</name>
        <dbReference type="ChEBI" id="CHEBI:58189"/>
    </ligand>
</feature>
<feature type="binding site" evidence="15 16 20 22 37 39 40 42 43">
    <location>
        <position position="74"/>
    </location>
    <ligand>
        <name>GDP</name>
        <dbReference type="ChEBI" id="CHEBI:58189"/>
    </ligand>
</feature>
<feature type="binding site" evidence="20 23 39 40 44 45 46">
    <location>
        <position position="74"/>
    </location>
    <ligand>
        <name>GTP</name>
        <dbReference type="ChEBI" id="CHEBI:37565"/>
    </ligand>
</feature>
<feature type="binding site" evidence="15 16 20 22 23 35 36 37 39 40 42 44 45 46">
    <location>
        <position position="75"/>
    </location>
    <ligand>
        <name>GDP</name>
        <dbReference type="ChEBI" id="CHEBI:58189"/>
    </ligand>
</feature>
<feature type="binding site" evidence="16 22 23 35 36 43 44 45 46">
    <location>
        <position position="76"/>
    </location>
    <ligand>
        <name>GDP</name>
        <dbReference type="ChEBI" id="CHEBI:58189"/>
    </ligand>
</feature>
<feature type="binding site" evidence="22 42">
    <location>
        <position position="90"/>
    </location>
    <ligand>
        <name>GDP</name>
        <dbReference type="ChEBI" id="CHEBI:58189"/>
    </ligand>
</feature>
<feature type="binding site" evidence="20 39 40">
    <location>
        <position position="90"/>
    </location>
    <ligand>
        <name>GTP</name>
        <dbReference type="ChEBI" id="CHEBI:37565"/>
    </ligand>
</feature>
<feature type="binding site" evidence="22 42 43">
    <location>
        <position position="94"/>
    </location>
    <ligand>
        <name>GDP</name>
        <dbReference type="ChEBI" id="CHEBI:58189"/>
    </ligand>
</feature>
<feature type="binding site" evidence="22 42">
    <location>
        <position position="96"/>
    </location>
    <ligand>
        <name>GDP</name>
        <dbReference type="ChEBI" id="CHEBI:58189"/>
    </ligand>
</feature>
<feature type="binding site" evidence="20 39 40">
    <location>
        <position position="96"/>
    </location>
    <ligand>
        <name>GTP</name>
        <dbReference type="ChEBI" id="CHEBI:37565"/>
    </ligand>
</feature>
<feature type="binding site" evidence="15 20 23 37 39 40 44 45 46">
    <location>
        <position position="178"/>
    </location>
    <ligand>
        <name>GDP</name>
        <dbReference type="ChEBI" id="CHEBI:58189"/>
    </ligand>
</feature>
<feature type="binding site" evidence="15 22 23 37 42 44 45 46">
    <location>
        <position position="179"/>
    </location>
    <ligand>
        <name>GDP</name>
        <dbReference type="ChEBI" id="CHEBI:58189"/>
    </ligand>
</feature>
<feature type="binding site" evidence="15 22 37 42">
    <location>
        <position position="181"/>
    </location>
    <ligand>
        <name>GDP</name>
        <dbReference type="ChEBI" id="CHEBI:58189"/>
    </ligand>
</feature>
<feature type="binding site" evidence="20 39 40">
    <location>
        <position position="181"/>
    </location>
    <ligand>
        <name>GTP</name>
        <dbReference type="ChEBI" id="CHEBI:37565"/>
    </ligand>
</feature>
<feature type="binding site" evidence="22 23 42 44 45 46">
    <location>
        <position position="219"/>
    </location>
    <ligand>
        <name>GDP</name>
        <dbReference type="ChEBI" id="CHEBI:58189"/>
    </ligand>
</feature>
<feature type="binding site" evidence="15 22 23 37 42 44 45 46">
    <location>
        <position position="220"/>
    </location>
    <ligand>
        <name>GDP</name>
        <dbReference type="ChEBI" id="CHEBI:58189"/>
    </ligand>
</feature>
<feature type="modified residue" description="N-acetylserine" evidence="48">
    <location>
        <position position="2"/>
    </location>
</feature>
<feature type="modified residue" description="Phosphoserine" evidence="48 49">
    <location>
        <position position="2"/>
    </location>
</feature>
<feature type="modified residue" description="Phosphoserine" evidence="49">
    <location>
        <position position="15"/>
    </location>
</feature>
<feature type="modified residue" description="Phosphothreonine" evidence="1">
    <location>
        <position position="96"/>
    </location>
</feature>
<feature type="sequence variant" id="VAR_088360" description="Found in patients with follicular lymphoma; increased activation of mTORC1." evidence="12">
    <original>K</original>
    <variation>R</variation>
    <location>
        <position position="74"/>
    </location>
</feature>
<feature type="sequence variant" id="VAR_088361" description="Found in patients with follicular lymphoma; maintains the GDP-bound state leading to constitutive activation of mTORC1." evidence="12">
    <original>S</original>
    <variation>F</variation>
    <location>
        <position position="75"/>
    </location>
</feature>
<feature type="sequence variant" id="VAR_088362" description="Found in patients with follicular lymphoma; maintains the GDP-bound state leading to constitutive activation of mTORC1." evidence="8 12">
    <original>S</original>
    <variation>N</variation>
    <location>
        <position position="75"/>
    </location>
</feature>
<feature type="sequence variant" id="VAR_076511" description="In LNGODS; renders cells partially insensitive to amino acid deprivation and result in activated mTORC1 signaling; results in altered regulation of TOR signaling; increased interaction with TFEB." evidence="12 13 21 24">
    <original>S</original>
    <variation>Y</variation>
    <location>
        <position position="75"/>
    </location>
</feature>
<feature type="sequence variant" id="VAR_088363" description="In LNGODS; also found in patients with follicular lymphoma; maintains the GDP-bound state leading to constitutive activation of mTORC1; results in altered regulation of TOR signaling." evidence="12 16 24">
    <original>T</original>
    <variation>N</variation>
    <location>
        <position position="90"/>
    </location>
</feature>
<feature type="sequence variant" id="VAR_088364" description="Found in patients with follicular lymphoma; increased activation of mTORC1." evidence="12">
    <original>I</original>
    <variation>F</variation>
    <location>
        <position position="99"/>
    </location>
</feature>
<feature type="sequence variant" id="VAR_088365" description="In LNGODS; also found in patients with follicular lymphoma; maintains the GDP-bound state leading to constitutive activation of mTORC1; results in altered regulation of TOR signaling." evidence="12 24">
    <original>W</original>
    <variation>R</variation>
    <location>
        <position position="115"/>
    </location>
</feature>
<feature type="sequence variant" id="VAR_088366" description="Found in patients with follicular lymphoma; increased activation of mTORC1; dbSNP:rs1169309358." evidence="12">
    <original>D</original>
    <variation>G</variation>
    <location>
        <position position="116"/>
    </location>
</feature>
<feature type="sequence variant" id="VAR_088367" description="In LNGODS; also found in patients with follicular lymphoma; results in altered regulation of TOR signaling and increased activation of mTORC1; dbSNP:rs745953523." evidence="12 24">
    <original>P</original>
    <variation>L</variation>
    <location>
        <position position="118"/>
    </location>
</feature>
<feature type="mutagenesis site" description="Constitutively active mutant. Increased RPTOR-binding." evidence="5 19">
    <original>S</original>
    <variation>L</variation>
    <location>
        <position position="75"/>
    </location>
</feature>
<feature type="mutagenesis site" description="Promotes interaction with GATOR1 in the GAP mode." evidence="22">
    <original>F</original>
    <variation>A</variation>
    <location>
        <position position="92"/>
    </location>
</feature>
<feature type="mutagenesis site" description="Maintains GTP-bound state, leading to inactivate mTORC1. Decreased RPTOR-binding." evidence="5 8 14 19">
    <original>Q</original>
    <variation>L</variation>
    <location>
        <position position="120"/>
    </location>
</feature>
<feature type="sequence conflict" description="In Ref. 1; AAG45221." evidence="25" ref="1">
    <original>A</original>
    <variation>S</variation>
    <location>
        <position position="206"/>
    </location>
</feature>
<feature type="strand" evidence="50">
    <location>
        <begin position="63"/>
        <end position="69"/>
    </location>
</feature>
<feature type="strand" evidence="53">
    <location>
        <begin position="70"/>
        <end position="73"/>
    </location>
</feature>
<feature type="helix" evidence="50">
    <location>
        <begin position="74"/>
        <end position="82"/>
    </location>
</feature>
<feature type="helix" evidence="50">
    <location>
        <begin position="87"/>
        <end position="92"/>
    </location>
</feature>
<feature type="strand" evidence="50">
    <location>
        <begin position="100"/>
        <end position="104"/>
    </location>
</feature>
<feature type="turn" evidence="54">
    <location>
        <begin position="105"/>
        <end position="108"/>
    </location>
</feature>
<feature type="strand" evidence="50">
    <location>
        <begin position="112"/>
        <end position="116"/>
    </location>
</feature>
<feature type="helix" evidence="50">
    <location>
        <begin position="130"/>
        <end position="135"/>
    </location>
</feature>
<feature type="strand" evidence="50">
    <location>
        <begin position="138"/>
        <end position="145"/>
    </location>
</feature>
<feature type="helix" evidence="50">
    <location>
        <begin position="151"/>
        <end position="167"/>
    </location>
</feature>
<feature type="strand" evidence="50">
    <location>
        <begin position="172"/>
        <end position="178"/>
    </location>
</feature>
<feature type="helix" evidence="50">
    <location>
        <begin position="180"/>
        <end position="182"/>
    </location>
</feature>
<feature type="helix" evidence="50">
    <location>
        <begin position="185"/>
        <end position="205"/>
    </location>
</feature>
<feature type="strand" evidence="50">
    <location>
        <begin position="213"/>
        <end position="218"/>
    </location>
</feature>
<feature type="strand" evidence="55">
    <location>
        <begin position="220"/>
        <end position="223"/>
    </location>
</feature>
<feature type="helix" evidence="50">
    <location>
        <begin position="224"/>
        <end position="235"/>
    </location>
</feature>
<feature type="helix" evidence="52">
    <location>
        <begin position="240"/>
        <end position="252"/>
    </location>
</feature>
<feature type="turn" evidence="52">
    <location>
        <begin position="253"/>
        <end position="255"/>
    </location>
</feature>
<feature type="strand" evidence="52">
    <location>
        <begin position="257"/>
        <end position="263"/>
    </location>
</feature>
<feature type="turn" evidence="52">
    <location>
        <begin position="264"/>
        <end position="267"/>
    </location>
</feature>
<feature type="strand" evidence="52">
    <location>
        <begin position="268"/>
        <end position="272"/>
    </location>
</feature>
<feature type="helix" evidence="52">
    <location>
        <begin position="279"/>
        <end position="298"/>
    </location>
</feature>
<feature type="strand" evidence="51">
    <location>
        <begin position="299"/>
        <end position="301"/>
    </location>
</feature>
<feature type="strand" evidence="52">
    <location>
        <begin position="303"/>
        <end position="305"/>
    </location>
</feature>
<feature type="strand" evidence="52">
    <location>
        <begin position="315"/>
        <end position="320"/>
    </location>
</feature>
<feature type="turn" evidence="52">
    <location>
        <begin position="321"/>
        <end position="323"/>
    </location>
</feature>
<feature type="strand" evidence="52">
    <location>
        <begin position="324"/>
        <end position="330"/>
    </location>
</feature>
<feature type="strand" evidence="52">
    <location>
        <begin position="332"/>
        <end position="342"/>
    </location>
</feature>
<feature type="helix" evidence="52">
    <location>
        <begin position="343"/>
        <end position="346"/>
    </location>
</feature>
<feature type="helix" evidence="52">
    <location>
        <begin position="349"/>
        <end position="366"/>
    </location>
</feature>
<feature type="turn" evidence="53">
    <location>
        <begin position="367"/>
        <end position="370"/>
    </location>
</feature>
<protein>
    <recommendedName>
        <fullName>Ras-related GTP-binding protein C</fullName>
        <shortName>Rag C</shortName>
        <shortName>RagC</shortName>
        <ecNumber evidence="3 26">3.6.5.-</ecNumber>
    </recommendedName>
    <alternativeName>
        <fullName>GTPase-interacting protein 2</fullName>
    </alternativeName>
    <alternativeName>
        <fullName>TIB929</fullName>
    </alternativeName>
</protein>
<reference evidence="28" key="1">
    <citation type="journal article" date="2001" name="Virology">
        <title>Adenovirus immunoregulatory genes and their cellular targets.</title>
        <authorList>
            <person name="Horwitz M.S."/>
        </authorList>
    </citation>
    <scope>NUCLEOTIDE SEQUENCE [MRNA]</scope>
</reference>
<reference evidence="25 27" key="2">
    <citation type="journal article" date="2001" name="J. Biol. Chem.">
        <title>Novel G proteins, Rag C and Rag D, interact with GTP-binding proteins, Rag A and Rag B.</title>
        <authorList>
            <person name="Sekiguchi T."/>
            <person name="Hirose E."/>
            <person name="Nakashima N."/>
            <person name="Ii M."/>
            <person name="Nishimoto T."/>
        </authorList>
    </citation>
    <scope>NUCLEOTIDE SEQUENCE [MRNA]</scope>
    <scope>CATALYTIC ACTIVITY</scope>
    <scope>INTERACTION WITH RRAGA AND RRAGB</scope>
    <scope>SUBCELLULAR LOCATION</scope>
    <scope>GTP-BINDING</scope>
</reference>
<reference key="3">
    <citation type="journal article" date="2006" name="Nature">
        <title>The DNA sequence and biological annotation of human chromosome 1.</title>
        <authorList>
            <person name="Gregory S.G."/>
            <person name="Barlow K.F."/>
            <person name="McLay K.E."/>
            <person name="Kaul R."/>
            <person name="Swarbreck D."/>
            <person name="Dunham A."/>
            <person name="Scott C.E."/>
            <person name="Howe K.L."/>
            <person name="Woodfine K."/>
            <person name="Spencer C.C.A."/>
            <person name="Jones M.C."/>
            <person name="Gillson C."/>
            <person name="Searle S."/>
            <person name="Zhou Y."/>
            <person name="Kokocinski F."/>
            <person name="McDonald L."/>
            <person name="Evans R."/>
            <person name="Phillips K."/>
            <person name="Atkinson A."/>
            <person name="Cooper R."/>
            <person name="Jones C."/>
            <person name="Hall R.E."/>
            <person name="Andrews T.D."/>
            <person name="Lloyd C."/>
            <person name="Ainscough R."/>
            <person name="Almeida J.P."/>
            <person name="Ambrose K.D."/>
            <person name="Anderson F."/>
            <person name="Andrew R.W."/>
            <person name="Ashwell R.I.S."/>
            <person name="Aubin K."/>
            <person name="Babbage A.K."/>
            <person name="Bagguley C.L."/>
            <person name="Bailey J."/>
            <person name="Beasley H."/>
            <person name="Bethel G."/>
            <person name="Bird C.P."/>
            <person name="Bray-Allen S."/>
            <person name="Brown J.Y."/>
            <person name="Brown A.J."/>
            <person name="Buckley D."/>
            <person name="Burton J."/>
            <person name="Bye J."/>
            <person name="Carder C."/>
            <person name="Chapman J.C."/>
            <person name="Clark S.Y."/>
            <person name="Clarke G."/>
            <person name="Clee C."/>
            <person name="Cobley V."/>
            <person name="Collier R.E."/>
            <person name="Corby N."/>
            <person name="Coville G.J."/>
            <person name="Davies J."/>
            <person name="Deadman R."/>
            <person name="Dunn M."/>
            <person name="Earthrowl M."/>
            <person name="Ellington A.G."/>
            <person name="Errington H."/>
            <person name="Frankish A."/>
            <person name="Frankland J."/>
            <person name="French L."/>
            <person name="Garner P."/>
            <person name="Garnett J."/>
            <person name="Gay L."/>
            <person name="Ghori M.R.J."/>
            <person name="Gibson R."/>
            <person name="Gilby L.M."/>
            <person name="Gillett W."/>
            <person name="Glithero R.J."/>
            <person name="Grafham D.V."/>
            <person name="Griffiths C."/>
            <person name="Griffiths-Jones S."/>
            <person name="Grocock R."/>
            <person name="Hammond S."/>
            <person name="Harrison E.S.I."/>
            <person name="Hart E."/>
            <person name="Haugen E."/>
            <person name="Heath P.D."/>
            <person name="Holmes S."/>
            <person name="Holt K."/>
            <person name="Howden P.J."/>
            <person name="Hunt A.R."/>
            <person name="Hunt S.E."/>
            <person name="Hunter G."/>
            <person name="Isherwood J."/>
            <person name="James R."/>
            <person name="Johnson C."/>
            <person name="Johnson D."/>
            <person name="Joy A."/>
            <person name="Kay M."/>
            <person name="Kershaw J.K."/>
            <person name="Kibukawa M."/>
            <person name="Kimberley A.M."/>
            <person name="King A."/>
            <person name="Knights A.J."/>
            <person name="Lad H."/>
            <person name="Laird G."/>
            <person name="Lawlor S."/>
            <person name="Leongamornlert D.A."/>
            <person name="Lloyd D.M."/>
            <person name="Loveland J."/>
            <person name="Lovell J."/>
            <person name="Lush M.J."/>
            <person name="Lyne R."/>
            <person name="Martin S."/>
            <person name="Mashreghi-Mohammadi M."/>
            <person name="Matthews L."/>
            <person name="Matthews N.S.W."/>
            <person name="McLaren S."/>
            <person name="Milne S."/>
            <person name="Mistry S."/>
            <person name="Moore M.J.F."/>
            <person name="Nickerson T."/>
            <person name="O'Dell C.N."/>
            <person name="Oliver K."/>
            <person name="Palmeiri A."/>
            <person name="Palmer S.A."/>
            <person name="Parker A."/>
            <person name="Patel D."/>
            <person name="Pearce A.V."/>
            <person name="Peck A.I."/>
            <person name="Pelan S."/>
            <person name="Phelps K."/>
            <person name="Phillimore B.J."/>
            <person name="Plumb R."/>
            <person name="Rajan J."/>
            <person name="Raymond C."/>
            <person name="Rouse G."/>
            <person name="Saenphimmachak C."/>
            <person name="Sehra H.K."/>
            <person name="Sheridan E."/>
            <person name="Shownkeen R."/>
            <person name="Sims S."/>
            <person name="Skuce C.D."/>
            <person name="Smith M."/>
            <person name="Steward C."/>
            <person name="Subramanian S."/>
            <person name="Sycamore N."/>
            <person name="Tracey A."/>
            <person name="Tromans A."/>
            <person name="Van Helmond Z."/>
            <person name="Wall M."/>
            <person name="Wallis J.M."/>
            <person name="White S."/>
            <person name="Whitehead S.L."/>
            <person name="Wilkinson J.E."/>
            <person name="Willey D.L."/>
            <person name="Williams H."/>
            <person name="Wilming L."/>
            <person name="Wray P.W."/>
            <person name="Wu Z."/>
            <person name="Coulson A."/>
            <person name="Vaudin M."/>
            <person name="Sulston J.E."/>
            <person name="Durbin R.M."/>
            <person name="Hubbard T."/>
            <person name="Wooster R."/>
            <person name="Dunham I."/>
            <person name="Carter N.P."/>
            <person name="McVean G."/>
            <person name="Ross M.T."/>
            <person name="Harrow J."/>
            <person name="Olson M.V."/>
            <person name="Beck S."/>
            <person name="Rogers J."/>
            <person name="Bentley D.R."/>
        </authorList>
    </citation>
    <scope>NUCLEOTIDE SEQUENCE [LARGE SCALE GENOMIC DNA]</scope>
</reference>
<reference evidence="29" key="4">
    <citation type="journal article" date="2004" name="Genome Res.">
        <title>The status, quality, and expansion of the NIH full-length cDNA project: the Mammalian Gene Collection (MGC).</title>
        <authorList>
            <consortium name="The MGC Project Team"/>
        </authorList>
    </citation>
    <scope>NUCLEOTIDE SEQUENCE [LARGE SCALE MRNA]</scope>
    <source>
        <tissue evidence="29">Lymph</tissue>
    </source>
</reference>
<reference evidence="25 30" key="5">
    <citation type="journal article" date="2004" name="Nat. Genet.">
        <title>Complete sequencing and characterization of 21,243 full-length human cDNAs.</title>
        <authorList>
            <person name="Ota T."/>
            <person name="Suzuki Y."/>
            <person name="Nishikawa T."/>
            <person name="Otsuki T."/>
            <person name="Sugiyama T."/>
            <person name="Irie R."/>
            <person name="Wakamatsu A."/>
            <person name="Hayashi K."/>
            <person name="Sato H."/>
            <person name="Nagai K."/>
            <person name="Kimura K."/>
            <person name="Makita H."/>
            <person name="Sekine M."/>
            <person name="Obayashi M."/>
            <person name="Nishi T."/>
            <person name="Shibahara T."/>
            <person name="Tanaka T."/>
            <person name="Ishii S."/>
            <person name="Yamamoto J."/>
            <person name="Saito K."/>
            <person name="Kawai Y."/>
            <person name="Isono Y."/>
            <person name="Nakamura Y."/>
            <person name="Nagahari K."/>
            <person name="Murakami K."/>
            <person name="Yasuda T."/>
            <person name="Iwayanagi T."/>
            <person name="Wagatsuma M."/>
            <person name="Shiratori A."/>
            <person name="Sudo H."/>
            <person name="Hosoiri T."/>
            <person name="Kaku Y."/>
            <person name="Kodaira H."/>
            <person name="Kondo H."/>
            <person name="Sugawara M."/>
            <person name="Takahashi M."/>
            <person name="Kanda K."/>
            <person name="Yokoi T."/>
            <person name="Furuya T."/>
            <person name="Kikkawa E."/>
            <person name="Omura Y."/>
            <person name="Abe K."/>
            <person name="Kamihara K."/>
            <person name="Katsuta N."/>
            <person name="Sato K."/>
            <person name="Tanikawa M."/>
            <person name="Yamazaki M."/>
            <person name="Ninomiya K."/>
            <person name="Ishibashi T."/>
            <person name="Yamashita H."/>
            <person name="Murakawa K."/>
            <person name="Fujimori K."/>
            <person name="Tanai H."/>
            <person name="Kimata M."/>
            <person name="Watanabe M."/>
            <person name="Hiraoka S."/>
            <person name="Chiba Y."/>
            <person name="Ishida S."/>
            <person name="Ono Y."/>
            <person name="Takiguchi S."/>
            <person name="Watanabe S."/>
            <person name="Yosida M."/>
            <person name="Hotuta T."/>
            <person name="Kusano J."/>
            <person name="Kanehori K."/>
            <person name="Takahashi-Fujii A."/>
            <person name="Hara H."/>
            <person name="Tanase T.-O."/>
            <person name="Nomura Y."/>
            <person name="Togiya S."/>
            <person name="Komai F."/>
            <person name="Hara R."/>
            <person name="Takeuchi K."/>
            <person name="Arita M."/>
            <person name="Imose N."/>
            <person name="Musashino K."/>
            <person name="Yuuki H."/>
            <person name="Oshima A."/>
            <person name="Sasaki N."/>
            <person name="Aotsuka S."/>
            <person name="Yoshikawa Y."/>
            <person name="Matsunawa H."/>
            <person name="Ichihara T."/>
            <person name="Shiohata N."/>
            <person name="Sano S."/>
            <person name="Moriya S."/>
            <person name="Momiyama H."/>
            <person name="Satoh N."/>
            <person name="Takami S."/>
            <person name="Terashima Y."/>
            <person name="Suzuki O."/>
            <person name="Nakagawa S."/>
            <person name="Senoh A."/>
            <person name="Mizoguchi H."/>
            <person name="Goto Y."/>
            <person name="Shimizu F."/>
            <person name="Wakebe H."/>
            <person name="Hishigaki H."/>
            <person name="Watanabe T."/>
            <person name="Sugiyama A."/>
            <person name="Takemoto M."/>
            <person name="Kawakami B."/>
            <person name="Yamazaki M."/>
            <person name="Watanabe K."/>
            <person name="Kumagai A."/>
            <person name="Itakura S."/>
            <person name="Fukuzumi Y."/>
            <person name="Fujimori Y."/>
            <person name="Komiyama M."/>
            <person name="Tashiro H."/>
            <person name="Tanigami A."/>
            <person name="Fujiwara T."/>
            <person name="Ono T."/>
            <person name="Yamada K."/>
            <person name="Fujii Y."/>
            <person name="Ozaki K."/>
            <person name="Hirao M."/>
            <person name="Ohmori Y."/>
            <person name="Kawabata A."/>
            <person name="Hikiji T."/>
            <person name="Kobatake N."/>
            <person name="Inagaki H."/>
            <person name="Ikema Y."/>
            <person name="Okamoto S."/>
            <person name="Okitani R."/>
            <person name="Kawakami T."/>
            <person name="Noguchi S."/>
            <person name="Itoh T."/>
            <person name="Shigeta K."/>
            <person name="Senba T."/>
            <person name="Matsumura K."/>
            <person name="Nakajima Y."/>
            <person name="Mizuno T."/>
            <person name="Morinaga M."/>
            <person name="Sasaki M."/>
            <person name="Togashi T."/>
            <person name="Oyama M."/>
            <person name="Hata H."/>
            <person name="Watanabe M."/>
            <person name="Komatsu T."/>
            <person name="Mizushima-Sugano J."/>
            <person name="Satoh T."/>
            <person name="Shirai Y."/>
            <person name="Takahashi Y."/>
            <person name="Nakagawa K."/>
            <person name="Okumura K."/>
            <person name="Nagase T."/>
            <person name="Nomura N."/>
            <person name="Kikuchi H."/>
            <person name="Masuho Y."/>
            <person name="Yamashita R."/>
            <person name="Nakai K."/>
            <person name="Yada T."/>
            <person name="Nakamura Y."/>
            <person name="Ohara O."/>
            <person name="Isogai T."/>
            <person name="Sugano S."/>
        </authorList>
    </citation>
    <scope>NUCLEOTIDE SEQUENCE [LARGE SCALE MRNA] OF 266-399</scope>
    <source>
        <tissue evidence="30">Ovary</tissue>
    </source>
</reference>
<reference evidence="25" key="6">
    <citation type="journal article" date="2004" name="J. Biol. Chem.">
        <title>A novel human nucleolar protein, Nop132, binds to the G proteins, RRAG A/C/D.</title>
        <authorList>
            <person name="Sekiguchi T."/>
            <person name="Todaka Y."/>
            <person name="Wang Y."/>
            <person name="Hirose E."/>
            <person name="Nakashima N."/>
            <person name="Nishimoto T."/>
        </authorList>
    </citation>
    <scope>INTERACTION WITH NOL8 AND RRAGA</scope>
</reference>
<reference key="7">
    <citation type="journal article" date="2008" name="Science">
        <title>The Rag GTPases bind raptor and mediate amino acid signaling to mTORC1.</title>
        <authorList>
            <person name="Sancak Y."/>
            <person name="Peterson T.R."/>
            <person name="Shaul Y.D."/>
            <person name="Lindquist R.A."/>
            <person name="Thoreen C.C."/>
            <person name="Bar-Peled L."/>
            <person name="Sabatini D.M."/>
        </authorList>
    </citation>
    <scope>INTERACTION WITH RPTOR</scope>
    <scope>MUTAGENESIS OF SER-75 AND GLN-120</scope>
</reference>
<reference key="8">
    <citation type="journal article" date="2010" name="Cell">
        <title>Ragulator-Rag complex targets mTORC1 to the lysosomal surface and is necessary for its activation by amino acids.</title>
        <authorList>
            <person name="Sancak Y."/>
            <person name="Bar-Peled L."/>
            <person name="Zoncu R."/>
            <person name="Markhard A.L."/>
            <person name="Nada S."/>
            <person name="Sabatini D.M."/>
        </authorList>
    </citation>
    <scope>FUNCTION</scope>
    <scope>SUBCELLULAR LOCATION</scope>
</reference>
<reference key="9">
    <citation type="journal article" date="2010" name="Sci. Signal.">
        <title>Quantitative phosphoproteomics reveals widespread full phosphorylation site occupancy during mitosis.</title>
        <authorList>
            <person name="Olsen J.V."/>
            <person name="Vermeulen M."/>
            <person name="Santamaria A."/>
            <person name="Kumar C."/>
            <person name="Miller M.L."/>
            <person name="Jensen L.J."/>
            <person name="Gnad F."/>
            <person name="Cox J."/>
            <person name="Jensen T.S."/>
            <person name="Nigg E.A."/>
            <person name="Brunak S."/>
            <person name="Mann M."/>
        </authorList>
    </citation>
    <scope>ACETYLATION [LARGE SCALE ANALYSIS] AT SER-2</scope>
    <scope>PHOSPHORYLATION [LARGE SCALE ANALYSIS] AT SER-2</scope>
    <scope>CLEAVAGE OF INITIATOR METHIONINE [LARGE SCALE ANALYSIS]</scope>
    <scope>IDENTIFICATION BY MASS SPECTROMETRY [LARGE SCALE ANALYSIS]</scope>
    <source>
        <tissue>Cervix carcinoma</tissue>
    </source>
</reference>
<reference key="10">
    <citation type="journal article" date="2011" name="BMC Syst. Biol.">
        <title>Initial characterization of the human central proteome.</title>
        <authorList>
            <person name="Burkard T.R."/>
            <person name="Planyavsky M."/>
            <person name="Kaupe I."/>
            <person name="Breitwieser F.P."/>
            <person name="Buerckstuemmer T."/>
            <person name="Bennett K.L."/>
            <person name="Superti-Furga G."/>
            <person name="Colinge J."/>
        </authorList>
    </citation>
    <scope>IDENTIFICATION BY MASS SPECTROMETRY [LARGE SCALE ANALYSIS]</scope>
</reference>
<reference key="11">
    <citation type="journal article" date="2012" name="Mol. Cell">
        <title>SH3BP4 is a negative regulator of amino acid-Rag GTPase-mTORC1 signaling.</title>
        <authorList>
            <person name="Kim Y.M."/>
            <person name="Stone M."/>
            <person name="Hwang T.H."/>
            <person name="Kim Y.G."/>
            <person name="Dunlevy J.R."/>
            <person name="Griffin T.J."/>
            <person name="Kim D.H."/>
        </authorList>
    </citation>
    <scope>INTERACTION WITH SH3BP4</scope>
</reference>
<reference key="12">
    <citation type="journal article" date="2013" name="J. Proteome Res.">
        <title>Toward a comprehensive characterization of a human cancer cell phosphoproteome.</title>
        <authorList>
            <person name="Zhou H."/>
            <person name="Di Palma S."/>
            <person name="Preisinger C."/>
            <person name="Peng M."/>
            <person name="Polat A.N."/>
            <person name="Heck A.J."/>
            <person name="Mohammed S."/>
        </authorList>
    </citation>
    <scope>PHOSPHORYLATION [LARGE SCALE ANALYSIS] AT SER-2 AND SER-15</scope>
    <scope>IDENTIFICATION BY MASS SPECTROMETRY [LARGE SCALE ANALYSIS]</scope>
    <source>
        <tissue>Cervix carcinoma</tissue>
        <tissue>Erythroleukemia</tissue>
    </source>
</reference>
<reference key="13">
    <citation type="journal article" date="2013" name="Mol. Cell">
        <title>The folliculin tumor suppressor is a GAP for the RagC/D GTPases that signal amino acid levels to mTORC1.</title>
        <authorList>
            <person name="Tsun Z.Y."/>
            <person name="Bar-Peled L."/>
            <person name="Chantranupong L."/>
            <person name="Zoncu R."/>
            <person name="Wang T."/>
            <person name="Kim C."/>
            <person name="Spooner E."/>
            <person name="Sabatini D.M."/>
        </authorList>
    </citation>
    <scope>FUNCTION</scope>
    <scope>CATALYTIC ACTIVITY</scope>
    <scope>ACTIVITY REGULATION</scope>
    <scope>MUTAGENESIS OF GLN-120</scope>
    <scope>CHARACTERIZATION OF VARIANT ASN-75</scope>
</reference>
<reference key="14">
    <citation type="journal article" date="2014" name="Cell">
        <title>Sestrins function as guanine nucleotide dissociation inhibitors for Rag GTPases to control mTORC1 signaling.</title>
        <authorList>
            <person name="Peng M."/>
            <person name="Yin N."/>
            <person name="Li M.O."/>
        </authorList>
    </citation>
    <scope>INTERACTION WITH SESN1; SESN2 AND SESN3</scope>
</reference>
<reference key="15">
    <citation type="journal article" date="2014" name="J. Proteomics">
        <title>An enzyme assisted RP-RPLC approach for in-depth analysis of human liver phosphoproteome.</title>
        <authorList>
            <person name="Bian Y."/>
            <person name="Song C."/>
            <person name="Cheng K."/>
            <person name="Dong M."/>
            <person name="Wang F."/>
            <person name="Huang J."/>
            <person name="Sun D."/>
            <person name="Wang L."/>
            <person name="Ye M."/>
            <person name="Zou H."/>
        </authorList>
    </citation>
    <scope>IDENTIFICATION BY MASS SPECTROMETRY [LARGE SCALE ANALYSIS]</scope>
    <source>
        <tissue>Liver</tissue>
    </source>
</reference>
<reference key="16">
    <citation type="journal article" date="2015" name="Nature">
        <title>SLC38A9 is a component of the lysosomal amino acid sensing machinery that controls mTORC1.</title>
        <authorList>
            <person name="Rebsamen M."/>
            <person name="Pochini L."/>
            <person name="Stasyk T."/>
            <person name="de Araujo M.E."/>
            <person name="Galluccio M."/>
            <person name="Kandasamy R.K."/>
            <person name="Snijder B."/>
            <person name="Fauster A."/>
            <person name="Rudashevskaya E.L."/>
            <person name="Bruckner M."/>
            <person name="Scorzoni S."/>
            <person name="Filipek P.A."/>
            <person name="Huber K.V."/>
            <person name="Bigenzahn J.W."/>
            <person name="Heinz L.X."/>
            <person name="Kraft C."/>
            <person name="Bennett K.L."/>
            <person name="Indiveri C."/>
            <person name="Huber L.A."/>
            <person name="Superti-Furga G."/>
        </authorList>
    </citation>
    <scope>INTERACTION WITH SLC38A9</scope>
</reference>
<reference key="17">
    <citation type="journal article" date="2015" name="Science">
        <title>Metabolism. Lysosomal amino acid transporter SLC38A9 signals arginine sufficiency to mTORC1.</title>
        <authorList>
            <person name="Wang S."/>
            <person name="Tsun Z.Y."/>
            <person name="Wolfson R.L."/>
            <person name="Shen K."/>
            <person name="Wyant G.A."/>
            <person name="Plovanich M.E."/>
            <person name="Yuan E.D."/>
            <person name="Jones T.D."/>
            <person name="Chantranupong L."/>
            <person name="Comb W."/>
            <person name="Wang T."/>
            <person name="Bar-Peled L."/>
            <person name="Zoncu R."/>
            <person name="Straub C."/>
            <person name="Kim C."/>
            <person name="Park J."/>
            <person name="Sabatini B.L."/>
            <person name="Sabatini D.M."/>
        </authorList>
    </citation>
    <scope>INTERACTION WITH SLC38A9</scope>
</reference>
<reference key="18">
    <citation type="journal article" date="2016" name="Hum. Genet.">
        <title>De novo RRAGC mutation activates mTORC1 signaling in syndromic fetal dilated cardiomyopathy.</title>
        <authorList>
            <person name="Long P.A."/>
            <person name="Zimmermann M.T."/>
            <person name="Kim M."/>
            <person name="Evans J.M."/>
            <person name="Xu X."/>
            <person name="Olson T.M."/>
        </authorList>
    </citation>
    <scope>INVOLVEMENT IN LNGODS</scope>
    <scope>VARIANT LNGODS TYR-75</scope>
    <scope>CHARACTERIZATION OF LNGODS VARIANT TYR-75</scope>
    <scope>FUNCTION</scope>
</reference>
<reference key="19">
    <citation type="journal article" date="2020" name="Nature">
        <title>A substrate-specific mTORC1 pathway underlies Birt-Hogg-Dube syndrome.</title>
        <authorList>
            <person name="Napolitano G."/>
            <person name="Di Malta C."/>
            <person name="Esposito A."/>
            <person name="de Araujo M.E.G."/>
            <person name="Pece S."/>
            <person name="Bertalot G."/>
            <person name="Matarese M."/>
            <person name="Benedetti V."/>
            <person name="Zampelli A."/>
            <person name="Stasyk T."/>
            <person name="Siciliano D."/>
            <person name="Venuta A."/>
            <person name="Cesana M."/>
            <person name="Vilardo C."/>
            <person name="Nusco E."/>
            <person name="Monfregola J."/>
            <person name="Calcagni A."/>
            <person name="Di Fiore P.P."/>
            <person name="Huber L.A."/>
            <person name="Ballabio A."/>
        </authorList>
    </citation>
    <scope>FUNCTION</scope>
    <scope>INTERACTION WITH TFEB</scope>
    <scope>MUTAGENESIS OF SER-75 AND GLN-120</scope>
</reference>
<reference evidence="33" key="20">
    <citation type="journal article" date="2017" name="Science">
        <title>Crystal structure of the human lysosomal mTORC1 scaffold complex and its impact on signaling.</title>
        <authorList>
            <person name="de Araujo M.E.G."/>
            <person name="Naschberger A."/>
            <person name="Fuernrohr B.G."/>
            <person name="Stasyk T."/>
            <person name="Dunzendorfer-Matt T."/>
            <person name="Lechner S."/>
            <person name="Welti S."/>
            <person name="Kremser L."/>
            <person name="Shivalingaiah G."/>
            <person name="Offterdinger M."/>
            <person name="Lindner H.H."/>
            <person name="Huber L.A."/>
            <person name="Scheffzek K."/>
        </authorList>
    </citation>
    <scope>X-RAY CRYSTALLOGRAPHY (2.90 ANGSTROMS) OF 183-313 IN COMPLEX WITH RRAGA; LAMTOR1; LAMTOR2; LAMTOR3; LAMTOR4 AND LAMTOR5</scope>
    <scope>SUBCELLULAR LOCATION</scope>
    <scope>MUTAGENESIS OF GLN-120</scope>
</reference>
<reference evidence="32" key="21">
    <citation type="journal article" date="2018" name="Nature">
        <title>Architecture of the human GATOR1 and GATOR1-Rag GTPases complexes.</title>
        <authorList>
            <person name="Shen K."/>
            <person name="Huang R.K."/>
            <person name="Brignole E.J."/>
            <person name="Condon K.J."/>
            <person name="Valenstein M.L."/>
            <person name="Chantranupong L."/>
            <person name="Bomaliyamu A."/>
            <person name="Choe A."/>
            <person name="Hong C."/>
            <person name="Yu Z."/>
            <person name="Sabatini D.M."/>
        </authorList>
    </citation>
    <scope>STRUCTURE BY ELECTRON MICROSCOPY (4.00 ANGSTROMS) IN COMPLEX WITH GTP ANALOG; RRAGA; DEPDC5; NPRL2 AND NPRL3</scope>
</reference>
<reference evidence="38" key="22">
    <citation type="journal article" date="2019" name="Cell">
        <title>Cryo-EM structure of the human FLCN-FNIP2-Rag-Ragulator complex.</title>
        <authorList>
            <person name="Shen K."/>
            <person name="Rogala K.B."/>
            <person name="Chou H.T."/>
            <person name="Huang R.K."/>
            <person name="Yu Z."/>
            <person name="Sabatini D.M."/>
        </authorList>
    </citation>
    <scope>STRUCTURE BY ELECTRON MICROSCOPY (3.31 ANGSTROMS) IN COMPLEX WITH FLCN; FNIP2; RRAGA; LAMTOR1; LAMTOR2; LAMTOR3; LAMTOR4 AND LAMTOR5</scope>
    <scope>IDENTIFICATION IN THE LFC COMPLEX</scope>
</reference>
<reference evidence="35 36" key="23">
    <citation type="journal article" date="2019" name="Science">
        <title>Architecture of human Rag GTPase heterodimers and their complex with mTORC1.</title>
        <authorList>
            <person name="Anandapadamanaban M."/>
            <person name="Masson G.R."/>
            <person name="Perisic O."/>
            <person name="Berndt A."/>
            <person name="Kaufman J."/>
            <person name="Johnson C.M."/>
            <person name="Santhanam B."/>
            <person name="Rogala K.B."/>
            <person name="Sabatini D.M."/>
            <person name="Williams R.L."/>
        </authorList>
    </citation>
    <scope>STRUCTURE BY ELECTRON MICROSCOPY (5.50 ANGSTROMS) IN COMPLEX WITH GDP; RRAGA; RPTOR; MLST8; MTOR AND AKT1S1</scope>
    <scope>FUNCTION</scope>
    <scope>VARIANT ASN-90</scope>
</reference>
<reference evidence="37" key="24">
    <citation type="journal article" date="2019" name="Science">
        <title>Structural basis for the docking of mTORC1 on the lysosomal surface.</title>
        <authorList>
            <person name="Rogala K.B."/>
            <person name="Gu X."/>
            <person name="Kedir J.F."/>
            <person name="Abu-Remaileh M."/>
            <person name="Bianchi L.F."/>
            <person name="Bottino A.M.S."/>
            <person name="Dueholm R."/>
            <person name="Niehaus A."/>
            <person name="Overwijn D."/>
            <person name="Fils A.P."/>
            <person name="Zhou S.X."/>
            <person name="Leary D."/>
            <person name="Laqtom N.N."/>
            <person name="Brignole E.J."/>
            <person name="Sabatini D.M."/>
        </authorList>
    </citation>
    <scope>STRUCTURE BY ELECTRON MICROSCOPY (3.18 ANGSTROMS) IN COMPLEX WITH GDP; RRAGA; RPTOR; LAMTOR1; LAMTOR2; LAMTOR3; LAMTOR4 AND LAMTOR5</scope>
</reference>
<reference evidence="34" key="25">
    <citation type="journal article" date="2019" name="Science">
        <title>Structural mechanism of a Rag GTPase activation checkpoint by the lysosomal folliculin complex.</title>
        <authorList>
            <person name="Lawrence R.E."/>
            <person name="Fromm S.A."/>
            <person name="Fu Y."/>
            <person name="Yokom A.L."/>
            <person name="Kim D.J."/>
            <person name="Thelen A.M."/>
            <person name="Young L.N."/>
            <person name="Lim C.Y."/>
            <person name="Samelson A.J."/>
            <person name="Hurley J.H."/>
            <person name="Zoncu R."/>
        </authorList>
    </citation>
    <scope>STRUCTURE BY ELECTRON MICROSCOPY (3.60 ANGSTROMS) IN COMPLEX WITH FLCN; FNIP2; RRAGA; LAMTOR1; LAMTOR2; LAMTOR3; LAMTOR4 AND LAMTOR5</scope>
    <scope>IDENTIFICATION IN THE LFC COMPLEX</scope>
</reference>
<reference evidence="39 40" key="26">
    <citation type="journal article" date="2020" name="Nat. Struct. Mol. Biol.">
        <title>Structural mechanism for amino acid-dependent Rag GTPase nucleotide state switching by SLC38A9.</title>
        <authorList>
            <person name="Fromm S.A."/>
            <person name="Lawrence R.E."/>
            <person name="Hurley J.H."/>
        </authorList>
    </citation>
    <scope>STRUCTURE BY ELECTRON MICROSCOPY (3.20 ANGSTROMS) IN COMPLEX WITH GTP; GDP; THE RAGULATOR COMPLEX; SLC38A9 AND RRAGA</scope>
    <scope>FUNCTION</scope>
    <scope>CATALYTIC ACTIVITY</scope>
    <scope>SUBUNIT</scope>
</reference>
<reference evidence="41 42 43" key="27">
    <citation type="journal article" date="2022" name="Mol. Cell">
        <title>Cryo-EM structures of the human GATOR1-Rag-Ragulator complex reveal a spatial-constraint regulated GAP mechanism.</title>
        <authorList>
            <person name="Egri S.B."/>
            <person name="Ouch C."/>
            <person name="Chou H.T."/>
            <person name="Yu Z."/>
            <person name="Song K."/>
            <person name="Xu C."/>
            <person name="Shen K."/>
        </authorList>
    </citation>
    <scope>STRUCTURE BY ELECTRON MICROSCOPY (3.90 ANGSTROMS) IN COMPLEX WITH GDP; RRAGA; DEPDC5; NPRL2; NPRL3; LAMTOR1; LAMTOR2; LAMTOR3; LAMTOR4 AND LAMTOR5</scope>
    <scope>ACTIVITY REGULATION</scope>
    <scope>MUTAGENESIS OF PHE-92</scope>
</reference>
<reference evidence="47" key="28">
    <citation type="journal article" date="2022" name="Sci. Adv.">
        <title>Structural basis for FLCN RagC GAP activation in MiT-TFE substrate-selective mTORC1 regulation.</title>
        <authorList>
            <person name="Jansen R.M."/>
            <person name="Peruzzo R."/>
            <person name="Fromm S.A."/>
            <person name="Yokom A.L."/>
            <person name="Zoncu R."/>
            <person name="Hurley J.H."/>
        </authorList>
    </citation>
    <scope>STRUCTURE BY ELECTRON MICROSCOPY (3.53 ANGSTROMS) IN COMPLEX WITH RRAGA; LAMTOR1; LAMTOR2; LAMTOR3; LAMTOR4; LAMTOR5; FNIP2; FLCN AND SLC38A9</scope>
</reference>
<reference evidence="44 45 46" key="29">
    <citation type="journal article" date="2023" name="Nature">
        <title>Structure of the lysosomal mTORC1-TFEB-Rag-Ragulator megacomplex.</title>
        <authorList>
            <person name="Cui Z."/>
            <person name="Napolitano G."/>
            <person name="de Araujo M.E.G."/>
            <person name="Esposito A."/>
            <person name="Monfregola J."/>
            <person name="Huber L.A."/>
            <person name="Ballabio A."/>
            <person name="Hurley J.H."/>
        </authorList>
    </citation>
    <scope>STRUCTURE BY ELECTRON MICROSCOPY (2.90 ANGSTROMS) IN COMPLEX WITH GDP; RRAGA; LAMTOR1; LAMTOR2; LAMTOR3; LAMTOR4; LAMTOR5; RPTOR; MLST8; MTOR AND TFEB</scope>
    <scope>FUNCTION</scope>
    <scope>INTERACTION WITH TFEB</scope>
</reference>
<reference key="30">
    <citation type="journal article" date="2016" name="Nat. Genet.">
        <title>Recurrent mTORC1-activating RRAGC mutations in follicular lymphoma.</title>
        <authorList>
            <person name="Okosun J."/>
            <person name="Wolfson R.L."/>
            <person name="Wang J."/>
            <person name="Araf S."/>
            <person name="Wilkins L."/>
            <person name="Castellano B.M."/>
            <person name="Escudero-Ibarz L."/>
            <person name="Al Seraihi A.F."/>
            <person name="Richter J."/>
            <person name="Bernhart S.H."/>
            <person name="Efeyan A."/>
            <person name="Iqbal S."/>
            <person name="Matthews J."/>
            <person name="Clear A."/>
            <person name="Guerra-Assuncao J.A."/>
            <person name="Boedoer C."/>
            <person name="Quentmeier H."/>
            <person name="Mansbridge C."/>
            <person name="Johnson P."/>
            <person name="Davies A."/>
            <person name="Strefford J.C."/>
            <person name="Packham G."/>
            <person name="Barrans S."/>
            <person name="Jack A."/>
            <person name="Du M.Q."/>
            <person name="Calaminici M."/>
            <person name="Lister T.A."/>
            <person name="Auer R."/>
            <person name="Montoto S."/>
            <person name="Gribben J.G."/>
            <person name="Siebert R."/>
            <person name="Chelala C."/>
            <person name="Zoncu R."/>
            <person name="Sabatini D.M."/>
            <person name="Fitzgibbon J."/>
        </authorList>
    </citation>
    <scope>VARIANTS LNGODS ASN-90; ARG-115 AND LEU-118</scope>
    <scope>CHARACTERIZATION OF VARIANTS LNGODS ASN-90; ARG-115 AND LEU-118</scope>
    <scope>CHARACTERIZATION OF ARG-74; ASN-75; PHE-75; PHE-99 AND GLY-116</scope>
</reference>
<reference key="31">
    <citation type="journal article" date="2021" name="Int. J. Mol. Sci.">
        <title>TFEB Overexpression, Not mTOR Inhibition, Ameliorates RagCS75Y Cardiomyopathy.</title>
        <authorList>
            <person name="Kim M."/>
            <person name="Lu L."/>
            <person name="Dvornikov A.V."/>
            <person name="Ma X."/>
            <person name="Ding Y."/>
            <person name="Zhu P."/>
            <person name="Olson T.M."/>
            <person name="Lin X."/>
            <person name="Xu X."/>
        </authorList>
    </citation>
    <scope>CHARACTERIZATION OF VARIANT LNGODS TYR-75</scope>
    <scope>FUNCTION</scope>
    <scope>INTERACTION WITH TFEB</scope>
</reference>
<reference key="32">
    <citation type="journal article" date="2023" name="Genet. Med.">
        <title>De novo missense variants in RRAGC lead to a fatal mTORopathy of early childhood.</title>
        <authorList>
            <person name="Reijnders M.R.F."/>
            <person name="Seibt A."/>
            <person name="Brugger M."/>
            <person name="Lamers I.J.C."/>
            <person name="Ott T."/>
            <person name="Klaas O."/>
            <person name="Horvath J."/>
            <person name="Rose A.M.S."/>
            <person name="Craghill I.M."/>
            <person name="Brunet T."/>
            <person name="Graf E."/>
            <person name="Mayerhanser K."/>
            <person name="Hellebrekers D."/>
            <person name="Pauck D."/>
            <person name="Neuen-Jacob E."/>
            <person name="Rodenburg R.J.T."/>
            <person name="Wieczorek D."/>
            <person name="Klee D."/>
            <person name="Mayatepek E."/>
            <person name="Driessen G."/>
            <person name="Bindermann R."/>
            <person name="Averdunk L."/>
            <person name="Lohmeier K."/>
            <person name="Sinnema M."/>
            <person name="Stegmann A.P.A."/>
            <person name="Roepman R."/>
            <person name="Poulter J.A."/>
            <person name="Distelmaier F."/>
        </authorList>
    </citation>
    <scope>VARIANTS LNGODS ASN-90; ARG-115 AND LEU-118</scope>
    <scope>CHARACTERIZATION OF VARIANTS LNGODS TYR-75; ASN-90; ARG-115 AND LEU-118</scope>
    <scope>FUNCTION</scope>
    <scope>INTERACTION WITH TFEB</scope>
</reference>